<feature type="chain" id="PRO_1000055749" description="Large ribosomal subunit protein uL14">
    <location>
        <begin position="1"/>
        <end position="122"/>
    </location>
</feature>
<comment type="function">
    <text evidence="1">Binds to 23S rRNA. Forms part of two intersubunit bridges in the 70S ribosome.</text>
</comment>
<comment type="subunit">
    <text evidence="1">Part of the 50S ribosomal subunit. Forms a cluster with proteins L3 and L19. In the 70S ribosome, L14 and L19 interact and together make contacts with the 16S rRNA in bridges B5 and B8.</text>
</comment>
<comment type="similarity">
    <text evidence="1">Belongs to the universal ribosomal protein uL14 family.</text>
</comment>
<name>RL14_VEREI</name>
<evidence type="ECO:0000255" key="1">
    <source>
        <dbReference type="HAMAP-Rule" id="MF_01367"/>
    </source>
</evidence>
<evidence type="ECO:0000305" key="2"/>
<sequence length="122" mass="13167">MIQTESRLEVADNTGAKSVLCIKVLGGSKRRYASVGDIIKVSVKEAAPRGRVKKGEIYSAVVVRTAKGIRRGDGSLVKFDGNAAVLLNAKLEPIGTRIFGPVTRELRTEKFMKIVSLAPEVL</sequence>
<organism>
    <name type="scientific">Verminephrobacter eiseniae (strain EF01-2)</name>
    <dbReference type="NCBI Taxonomy" id="391735"/>
    <lineage>
        <taxon>Bacteria</taxon>
        <taxon>Pseudomonadati</taxon>
        <taxon>Pseudomonadota</taxon>
        <taxon>Betaproteobacteria</taxon>
        <taxon>Burkholderiales</taxon>
        <taxon>Comamonadaceae</taxon>
        <taxon>Verminephrobacter</taxon>
    </lineage>
</organism>
<protein>
    <recommendedName>
        <fullName evidence="1">Large ribosomal subunit protein uL14</fullName>
    </recommendedName>
    <alternativeName>
        <fullName evidence="2">50S ribosomal protein L14</fullName>
    </alternativeName>
</protein>
<keyword id="KW-1185">Reference proteome</keyword>
<keyword id="KW-0687">Ribonucleoprotein</keyword>
<keyword id="KW-0689">Ribosomal protein</keyword>
<keyword id="KW-0694">RNA-binding</keyword>
<keyword id="KW-0699">rRNA-binding</keyword>
<proteinExistence type="inferred from homology"/>
<gene>
    <name evidence="1" type="primary">rplN</name>
    <name type="ordered locus">Veis_2315</name>
</gene>
<reference key="1">
    <citation type="submission" date="2006-12" db="EMBL/GenBank/DDBJ databases">
        <title>Complete sequence of chromosome 1 of Verminephrobacter eiseniae EF01-2.</title>
        <authorList>
            <person name="Copeland A."/>
            <person name="Lucas S."/>
            <person name="Lapidus A."/>
            <person name="Barry K."/>
            <person name="Detter J.C."/>
            <person name="Glavina del Rio T."/>
            <person name="Dalin E."/>
            <person name="Tice H."/>
            <person name="Pitluck S."/>
            <person name="Chertkov O."/>
            <person name="Brettin T."/>
            <person name="Bruce D."/>
            <person name="Han C."/>
            <person name="Tapia R."/>
            <person name="Gilna P."/>
            <person name="Schmutz J."/>
            <person name="Larimer F."/>
            <person name="Land M."/>
            <person name="Hauser L."/>
            <person name="Kyrpides N."/>
            <person name="Kim E."/>
            <person name="Stahl D."/>
            <person name="Richardson P."/>
        </authorList>
    </citation>
    <scope>NUCLEOTIDE SEQUENCE [LARGE SCALE GENOMIC DNA]</scope>
    <source>
        <strain>EF01-2</strain>
    </source>
</reference>
<accession>A1WKA6</accession>
<dbReference type="EMBL" id="CP000542">
    <property type="protein sequence ID" value="ABM58063.1"/>
    <property type="molecule type" value="Genomic_DNA"/>
</dbReference>
<dbReference type="RefSeq" id="WP_011810066.1">
    <property type="nucleotide sequence ID" value="NC_008786.1"/>
</dbReference>
<dbReference type="SMR" id="A1WKA6"/>
<dbReference type="STRING" id="391735.Veis_2315"/>
<dbReference type="GeneID" id="76460880"/>
<dbReference type="KEGG" id="vei:Veis_2315"/>
<dbReference type="eggNOG" id="COG0093">
    <property type="taxonomic scope" value="Bacteria"/>
</dbReference>
<dbReference type="HOGENOM" id="CLU_095071_2_1_4"/>
<dbReference type="OrthoDB" id="9806379at2"/>
<dbReference type="Proteomes" id="UP000000374">
    <property type="component" value="Chromosome"/>
</dbReference>
<dbReference type="GO" id="GO:0022625">
    <property type="term" value="C:cytosolic large ribosomal subunit"/>
    <property type="evidence" value="ECO:0007669"/>
    <property type="project" value="TreeGrafter"/>
</dbReference>
<dbReference type="GO" id="GO:0070180">
    <property type="term" value="F:large ribosomal subunit rRNA binding"/>
    <property type="evidence" value="ECO:0007669"/>
    <property type="project" value="TreeGrafter"/>
</dbReference>
<dbReference type="GO" id="GO:0003735">
    <property type="term" value="F:structural constituent of ribosome"/>
    <property type="evidence" value="ECO:0007669"/>
    <property type="project" value="InterPro"/>
</dbReference>
<dbReference type="GO" id="GO:0006412">
    <property type="term" value="P:translation"/>
    <property type="evidence" value="ECO:0007669"/>
    <property type="project" value="UniProtKB-UniRule"/>
</dbReference>
<dbReference type="CDD" id="cd00337">
    <property type="entry name" value="Ribosomal_uL14"/>
    <property type="match status" value="1"/>
</dbReference>
<dbReference type="FunFam" id="2.40.150.20:FF:000001">
    <property type="entry name" value="50S ribosomal protein L14"/>
    <property type="match status" value="1"/>
</dbReference>
<dbReference type="Gene3D" id="2.40.150.20">
    <property type="entry name" value="Ribosomal protein L14"/>
    <property type="match status" value="1"/>
</dbReference>
<dbReference type="HAMAP" id="MF_01367">
    <property type="entry name" value="Ribosomal_uL14"/>
    <property type="match status" value="1"/>
</dbReference>
<dbReference type="InterPro" id="IPR000218">
    <property type="entry name" value="Ribosomal_uL14"/>
</dbReference>
<dbReference type="InterPro" id="IPR005745">
    <property type="entry name" value="Ribosomal_uL14_bac-type"/>
</dbReference>
<dbReference type="InterPro" id="IPR019972">
    <property type="entry name" value="Ribosomal_uL14_CS"/>
</dbReference>
<dbReference type="InterPro" id="IPR036853">
    <property type="entry name" value="Ribosomal_uL14_sf"/>
</dbReference>
<dbReference type="NCBIfam" id="TIGR01067">
    <property type="entry name" value="rplN_bact"/>
    <property type="match status" value="1"/>
</dbReference>
<dbReference type="PANTHER" id="PTHR11761">
    <property type="entry name" value="50S/60S RIBOSOMAL PROTEIN L14/L23"/>
    <property type="match status" value="1"/>
</dbReference>
<dbReference type="PANTHER" id="PTHR11761:SF3">
    <property type="entry name" value="LARGE RIBOSOMAL SUBUNIT PROTEIN UL14M"/>
    <property type="match status" value="1"/>
</dbReference>
<dbReference type="Pfam" id="PF00238">
    <property type="entry name" value="Ribosomal_L14"/>
    <property type="match status" value="1"/>
</dbReference>
<dbReference type="SMART" id="SM01374">
    <property type="entry name" value="Ribosomal_L14"/>
    <property type="match status" value="1"/>
</dbReference>
<dbReference type="SUPFAM" id="SSF50193">
    <property type="entry name" value="Ribosomal protein L14"/>
    <property type="match status" value="1"/>
</dbReference>
<dbReference type="PROSITE" id="PS00049">
    <property type="entry name" value="RIBOSOMAL_L14"/>
    <property type="match status" value="1"/>
</dbReference>